<organism>
    <name type="scientific">Gallus gallus</name>
    <name type="common">Chicken</name>
    <dbReference type="NCBI Taxonomy" id="9031"/>
    <lineage>
        <taxon>Eukaryota</taxon>
        <taxon>Metazoa</taxon>
        <taxon>Chordata</taxon>
        <taxon>Craniata</taxon>
        <taxon>Vertebrata</taxon>
        <taxon>Euteleostomi</taxon>
        <taxon>Archelosauria</taxon>
        <taxon>Archosauria</taxon>
        <taxon>Dinosauria</taxon>
        <taxon>Saurischia</taxon>
        <taxon>Theropoda</taxon>
        <taxon>Coelurosauria</taxon>
        <taxon>Aves</taxon>
        <taxon>Neognathae</taxon>
        <taxon>Galloanserae</taxon>
        <taxon>Galliformes</taxon>
        <taxon>Phasianidae</taxon>
        <taxon>Phasianinae</taxon>
        <taxon>Gallus</taxon>
    </lineage>
</organism>
<reference key="1">
    <citation type="journal article" date="1995" name="Gene">
        <title>Sequence of a chicken erythroblast mono(ADP-ribosyl)transferase-encoding gene and its upstream region.</title>
        <authorList>
            <person name="Davis T."/>
            <person name="Shall S."/>
        </authorList>
    </citation>
    <scope>NUCLEOTIDE SEQUENCE [GENOMIC DNA / MRNA]</scope>
    <source>
        <tissue>Blood</tissue>
    </source>
</reference>
<comment type="catalytic activity">
    <reaction>
        <text>L-arginyl-[protein] + NAD(+) = N(omega)-(ADP-D-ribosyl)-L-arginyl-[protein] + nicotinamide + H(+)</text>
        <dbReference type="Rhea" id="RHEA:19149"/>
        <dbReference type="Rhea" id="RHEA-COMP:10532"/>
        <dbReference type="Rhea" id="RHEA-COMP:15087"/>
        <dbReference type="ChEBI" id="CHEBI:15378"/>
        <dbReference type="ChEBI" id="CHEBI:17154"/>
        <dbReference type="ChEBI" id="CHEBI:29965"/>
        <dbReference type="ChEBI" id="CHEBI:57540"/>
        <dbReference type="ChEBI" id="CHEBI:142554"/>
        <dbReference type="EC" id="2.4.2.31"/>
    </reaction>
</comment>
<comment type="similarity">
    <text evidence="5">Belongs to the Arg-specific ADP-ribosyltransferase family.</text>
</comment>
<feature type="signal peptide" evidence="2">
    <location>
        <begin position="1"/>
        <end position="22"/>
    </location>
</feature>
<feature type="chain" id="PRO_0000019341" description="Erythroblast NAD(P)(+)--arginine ADP-ribosyltransferase">
    <location>
        <begin position="23"/>
        <end position="300"/>
    </location>
</feature>
<feature type="domain" description="TR mART core" evidence="3">
    <location>
        <begin position="70"/>
        <end position="256"/>
    </location>
</feature>
<feature type="region of interest" description="Disordered" evidence="4">
    <location>
        <begin position="276"/>
        <end position="300"/>
    </location>
</feature>
<feature type="active site" evidence="3">
    <location>
        <position position="164"/>
    </location>
</feature>
<feature type="active site" evidence="3">
    <location>
        <position position="186"/>
    </location>
</feature>
<feature type="active site" evidence="3">
    <location>
        <position position="224"/>
    </location>
</feature>
<feature type="binding site" evidence="1">
    <location>
        <position position="107"/>
    </location>
    <ligand>
        <name>NAD(+)</name>
        <dbReference type="ChEBI" id="CHEBI:57540"/>
    </ligand>
</feature>
<feature type="binding site" evidence="1">
    <location>
        <position position="164"/>
    </location>
    <ligand>
        <name>NAD(+)</name>
        <dbReference type="ChEBI" id="CHEBI:57540"/>
    </ligand>
</feature>
<feature type="binding site" evidence="1">
    <location>
        <position position="183"/>
    </location>
    <ligand>
        <name>NAD(+)</name>
        <dbReference type="ChEBI" id="CHEBI:57540"/>
    </ligand>
</feature>
<feature type="binding site" evidence="1">
    <location>
        <position position="217"/>
    </location>
    <ligand>
        <name>NAD(+)</name>
        <dbReference type="ChEBI" id="CHEBI:57540"/>
    </ligand>
</feature>
<feature type="disulfide bond" evidence="1">
    <location>
        <begin position="51"/>
        <end position="260"/>
    </location>
</feature>
<feature type="disulfide bond" evidence="1">
    <location>
        <begin position="159"/>
        <end position="208"/>
    </location>
</feature>
<feature type="sequence conflict" description="In Ref. 1; CAA58649." evidence="5" ref="1">
    <original>Q</original>
    <variation>E</variation>
    <location>
        <position position="60"/>
    </location>
</feature>
<feature type="sequence conflict" description="In Ref. 1; CAA58649." evidence="5" ref="1">
    <original>E</original>
    <variation>K</variation>
    <location>
        <position position="81"/>
    </location>
</feature>
<name>NARE_CHICK</name>
<proteinExistence type="evidence at transcript level"/>
<accession>Q92080</accession>
<accession>Q91050</accession>
<dbReference type="EC" id="2.4.2.31"/>
<dbReference type="EMBL" id="X83676">
    <property type="protein sequence ID" value="CAA58649.1"/>
    <property type="molecule type" value="Genomic_DNA"/>
</dbReference>
<dbReference type="EMBL" id="X82397">
    <property type="protein sequence ID" value="CAA57793.1"/>
    <property type="molecule type" value="mRNA"/>
</dbReference>
<dbReference type="PIR" id="JC4367">
    <property type="entry name" value="JC4367"/>
</dbReference>
<dbReference type="SMR" id="Q92080"/>
<dbReference type="FunCoup" id="Q92080">
    <property type="interactions" value="77"/>
</dbReference>
<dbReference type="STRING" id="9031.ENSGALP00000072297"/>
<dbReference type="PaxDb" id="9031-ENSGALP00000035605"/>
<dbReference type="VEuPathDB" id="HostDB:LOC121109081"/>
<dbReference type="eggNOG" id="ENOG502QUE9">
    <property type="taxonomic scope" value="Eukaryota"/>
</dbReference>
<dbReference type="InParanoid" id="Q92080"/>
<dbReference type="PhylomeDB" id="Q92080"/>
<dbReference type="Proteomes" id="UP000000539">
    <property type="component" value="Unassembled WGS sequence"/>
</dbReference>
<dbReference type="GO" id="GO:0003950">
    <property type="term" value="F:NAD+ poly-ADP-ribosyltransferase activity"/>
    <property type="evidence" value="ECO:0000318"/>
    <property type="project" value="GO_Central"/>
</dbReference>
<dbReference type="GO" id="GO:0106274">
    <property type="term" value="F:NAD+-protein-arginine ADP-ribosyltransferase activity"/>
    <property type="evidence" value="ECO:0007669"/>
    <property type="project" value="UniProtKB-EC"/>
</dbReference>
<dbReference type="GO" id="GO:0016779">
    <property type="term" value="F:nucleotidyltransferase activity"/>
    <property type="evidence" value="ECO:0007669"/>
    <property type="project" value="UniProtKB-KW"/>
</dbReference>
<dbReference type="FunFam" id="3.90.176.10:FF:000001">
    <property type="entry name" value="NAD(P)(+)--arginine ADP-ribosyltransferase"/>
    <property type="match status" value="1"/>
</dbReference>
<dbReference type="Gene3D" id="3.90.176.10">
    <property type="entry name" value="Toxin ADP-ribosyltransferase, Chain A, domain 1"/>
    <property type="match status" value="1"/>
</dbReference>
<dbReference type="InterPro" id="IPR050999">
    <property type="entry name" value="ADP-ribosyltransferase_ARG"/>
</dbReference>
<dbReference type="InterPro" id="IPR000768">
    <property type="entry name" value="ART"/>
</dbReference>
<dbReference type="PANTHER" id="PTHR10339">
    <property type="entry name" value="ADP-RIBOSYLTRANSFERASE"/>
    <property type="match status" value="1"/>
</dbReference>
<dbReference type="PANTHER" id="PTHR10339:SF19">
    <property type="entry name" value="GPI-LINKED NAD(P)(+)--ARGININE ADP-RIBOSYLTRANSFERASE 1"/>
    <property type="match status" value="1"/>
</dbReference>
<dbReference type="Pfam" id="PF01129">
    <property type="entry name" value="ART"/>
    <property type="match status" value="1"/>
</dbReference>
<dbReference type="PRINTS" id="PR00970">
    <property type="entry name" value="RIBTRNSFRASE"/>
</dbReference>
<dbReference type="SUPFAM" id="SSF56399">
    <property type="entry name" value="ADP-ribosylation"/>
    <property type="match status" value="1"/>
</dbReference>
<dbReference type="PROSITE" id="PS01291">
    <property type="entry name" value="ART"/>
    <property type="match status" value="1"/>
</dbReference>
<dbReference type="PROSITE" id="PS51996">
    <property type="entry name" value="TR_MART"/>
    <property type="match status" value="1"/>
</dbReference>
<protein>
    <recommendedName>
        <fullName>Erythroblast NAD(P)(+)--arginine ADP-ribosyltransferase</fullName>
        <ecNumber>2.4.2.31</ecNumber>
    </recommendedName>
    <alternativeName>
        <fullName>Mono(ADP-ribosyl)transferase</fullName>
    </alternativeName>
</protein>
<gene>
    <name type="primary">MADPRT</name>
</gene>
<keyword id="KW-1015">Disulfide bond</keyword>
<keyword id="KW-0328">Glycosyltransferase</keyword>
<keyword id="KW-0520">NAD</keyword>
<keyword id="KW-0521">NADP</keyword>
<keyword id="KW-0548">Nucleotidyltransferase</keyword>
<keyword id="KW-1185">Reference proteome</keyword>
<keyword id="KW-0732">Signal</keyword>
<keyword id="KW-0808">Transferase</keyword>
<evidence type="ECO:0000250" key="1"/>
<evidence type="ECO:0000255" key="2"/>
<evidence type="ECO:0000255" key="3">
    <source>
        <dbReference type="PROSITE-ProRule" id="PRU01340"/>
    </source>
</evidence>
<evidence type="ECO:0000256" key="4">
    <source>
        <dbReference type="SAM" id="MobiDB-lite"/>
    </source>
</evidence>
<evidence type="ECO:0000305" key="5"/>
<sequence length="300" mass="34008">MEEPLLHAILGLVLLLSTRTDASAARSKKGPIKEVVMDMAPHSFDDQYQGCIDLMEAELQELNRTEFANETFAEGWRSATEEWQRRWGRVSSPMVLRQDQAIAVLAYTMEGELYRVFNNATLTAGRSRQHYLSSYPFKTLHFLLSRALHTLQESQTQPCHNVFRGVRGTRFTAQQGTVVRFGQFTSSSLQKKVAEFFGLDTFFSVETCYGVPIKDLSTFPGEDEVLIPPFEQFRVTNSTYTAGRSFIQLRSQGKSSTYNCEFVKEKRCKERPCAFSADKSSPLPRSPWPGWAPLAAPHSH</sequence>